<gene>
    <name type="primary">PPP4R2</name>
    <name type="ORF">SBBI57</name>
</gene>
<dbReference type="EMBL" id="AJ271448">
    <property type="protein sequence ID" value="CAB93534.2"/>
    <property type="status" value="ALT_INIT"/>
    <property type="molecule type" value="mRNA"/>
</dbReference>
<dbReference type="EMBL" id="AF327345">
    <property type="protein sequence ID" value="AAL56006.1"/>
    <property type="molecule type" value="mRNA"/>
</dbReference>
<dbReference type="EMBL" id="AK289901">
    <property type="protein sequence ID" value="BAF82590.1"/>
    <property type="molecule type" value="mRNA"/>
</dbReference>
<dbReference type="EMBL" id="CH471055">
    <property type="protein sequence ID" value="EAW65530.1"/>
    <property type="molecule type" value="Genomic_DNA"/>
</dbReference>
<dbReference type="EMBL" id="BC100281">
    <property type="protein sequence ID" value="AAI00282.1"/>
    <property type="status" value="ALT_SEQ"/>
    <property type="molecule type" value="mRNA"/>
</dbReference>
<dbReference type="EMBL" id="BC110889">
    <property type="protein sequence ID" value="AAI10890.1"/>
    <property type="molecule type" value="mRNA"/>
</dbReference>
<dbReference type="EMBL" id="BC128136">
    <property type="protein sequence ID" value="AAI28137.1"/>
    <property type="molecule type" value="mRNA"/>
</dbReference>
<dbReference type="EMBL" id="BC128137">
    <property type="protein sequence ID" value="AAI28138.1"/>
    <property type="molecule type" value="mRNA"/>
</dbReference>
<dbReference type="CCDS" id="CCDS2917.1">
    <molecule id="Q9NY27-1"/>
</dbReference>
<dbReference type="RefSeq" id="NP_001304954.1">
    <molecule id="Q9NY27-2"/>
    <property type="nucleotide sequence ID" value="NM_001318025.2"/>
</dbReference>
<dbReference type="RefSeq" id="NP_001304955.1">
    <property type="nucleotide sequence ID" value="NM_001318026.1"/>
</dbReference>
<dbReference type="RefSeq" id="NP_001304956.1">
    <property type="nucleotide sequence ID" value="NM_001318027.1"/>
</dbReference>
<dbReference type="RefSeq" id="NP_777567.1">
    <molecule id="Q9NY27-1"/>
    <property type="nucleotide sequence ID" value="NM_174907.4"/>
</dbReference>
<dbReference type="BioGRID" id="127414">
    <property type="interactions" value="119"/>
</dbReference>
<dbReference type="ComplexPortal" id="CPX-156">
    <property type="entry name" value="PPP4C-PPP4R2 protein phosphatase 4 complex"/>
</dbReference>
<dbReference type="ComplexPortal" id="CPX-1843">
    <property type="entry name" value="PPP4C-PPP4R2-PPP4R3A protein phosphatase 4 complex"/>
</dbReference>
<dbReference type="ComplexPortal" id="CPX-1844">
    <property type="entry name" value="PPP4C-PPP4R2-PPP4R3B protein phosphatase 4 complex"/>
</dbReference>
<dbReference type="CORUM" id="Q9NY27"/>
<dbReference type="FunCoup" id="Q9NY27">
    <property type="interactions" value="2766"/>
</dbReference>
<dbReference type="IntAct" id="Q9NY27">
    <property type="interactions" value="57"/>
</dbReference>
<dbReference type="MINT" id="Q9NY27"/>
<dbReference type="STRING" id="9606.ENSP00000349124"/>
<dbReference type="GlyGen" id="Q9NY27">
    <property type="glycosylation" value="1 site, 1 O-linked glycan (1 site)"/>
</dbReference>
<dbReference type="iPTMnet" id="Q9NY27"/>
<dbReference type="MetOSite" id="Q9NY27"/>
<dbReference type="PhosphoSitePlus" id="Q9NY27"/>
<dbReference type="SwissPalm" id="Q9NY27"/>
<dbReference type="BioMuta" id="PPP4R2"/>
<dbReference type="DMDM" id="158564082"/>
<dbReference type="jPOST" id="Q9NY27"/>
<dbReference type="MassIVE" id="Q9NY27"/>
<dbReference type="PaxDb" id="9606-ENSP00000349124"/>
<dbReference type="PeptideAtlas" id="Q9NY27"/>
<dbReference type="ProteomicsDB" id="83154">
    <molecule id="Q9NY27-1"/>
</dbReference>
<dbReference type="ProteomicsDB" id="83155">
    <molecule id="Q9NY27-2"/>
</dbReference>
<dbReference type="ProteomicsDB" id="83156">
    <molecule id="Q9NY27-3"/>
</dbReference>
<dbReference type="Pumba" id="Q9NY27"/>
<dbReference type="Antibodypedia" id="35014">
    <property type="antibodies" value="165 antibodies from 25 providers"/>
</dbReference>
<dbReference type="DNASU" id="151987"/>
<dbReference type="Ensembl" id="ENST00000356692.10">
    <molecule id="Q9NY27-1"/>
    <property type="protein sequence ID" value="ENSP00000349124.5"/>
    <property type="gene ID" value="ENSG00000163605.16"/>
</dbReference>
<dbReference type="GeneID" id="151987"/>
<dbReference type="KEGG" id="hsa:151987"/>
<dbReference type="MANE-Select" id="ENST00000356692.10">
    <property type="protein sequence ID" value="ENSP00000349124.5"/>
    <property type="RefSeq nucleotide sequence ID" value="NM_174907.4"/>
    <property type="RefSeq protein sequence ID" value="NP_777567.1"/>
</dbReference>
<dbReference type="UCSC" id="uc003dph.2">
    <molecule id="Q9NY27-1"/>
    <property type="organism name" value="human"/>
</dbReference>
<dbReference type="AGR" id="HGNC:18296"/>
<dbReference type="CTD" id="151987"/>
<dbReference type="DisGeNET" id="151987"/>
<dbReference type="GeneCards" id="PPP4R2"/>
<dbReference type="HGNC" id="HGNC:18296">
    <property type="gene designation" value="PPP4R2"/>
</dbReference>
<dbReference type="HPA" id="ENSG00000163605">
    <property type="expression patterns" value="Low tissue specificity"/>
</dbReference>
<dbReference type="MIM" id="613822">
    <property type="type" value="gene"/>
</dbReference>
<dbReference type="neXtProt" id="NX_Q9NY27"/>
<dbReference type="OpenTargets" id="ENSG00000163605"/>
<dbReference type="PharmGKB" id="PA38520"/>
<dbReference type="VEuPathDB" id="HostDB:ENSG00000163605"/>
<dbReference type="eggNOG" id="KOG3175">
    <property type="taxonomic scope" value="Eukaryota"/>
</dbReference>
<dbReference type="GeneTree" id="ENSGT00940000160975"/>
<dbReference type="HOGENOM" id="CLU_043908_1_1_1"/>
<dbReference type="InParanoid" id="Q9NY27"/>
<dbReference type="OMA" id="PMEDTPV"/>
<dbReference type="OrthoDB" id="341898at2759"/>
<dbReference type="PAN-GO" id="Q9NY27">
    <property type="GO annotations" value="5 GO annotations based on evolutionary models"/>
</dbReference>
<dbReference type="PhylomeDB" id="Q9NY27"/>
<dbReference type="TreeFam" id="TF105561"/>
<dbReference type="PathwayCommons" id="Q9NY27"/>
<dbReference type="Reactome" id="R-HSA-5693607">
    <property type="pathway name" value="Processing of DNA double-strand break ends"/>
</dbReference>
<dbReference type="SignaLink" id="Q9NY27"/>
<dbReference type="BioGRID-ORCS" id="151987">
    <property type="hits" value="405 hits in 1131 CRISPR screens"/>
</dbReference>
<dbReference type="CD-CODE" id="8C2F96ED">
    <property type="entry name" value="Centrosome"/>
</dbReference>
<dbReference type="ChiTaRS" id="PPP4R2">
    <property type="organism name" value="human"/>
</dbReference>
<dbReference type="GenomeRNAi" id="151987"/>
<dbReference type="Pharos" id="Q9NY27">
    <property type="development level" value="Tbio"/>
</dbReference>
<dbReference type="PRO" id="PR:Q9NY27"/>
<dbReference type="Proteomes" id="UP000005640">
    <property type="component" value="Chromosome 3"/>
</dbReference>
<dbReference type="RNAct" id="Q9NY27">
    <property type="molecule type" value="protein"/>
</dbReference>
<dbReference type="Bgee" id="ENSG00000163605">
    <property type="expression patterns" value="Expressed in secondary oocyte and 191 other cell types or tissues"/>
</dbReference>
<dbReference type="ExpressionAtlas" id="Q9NY27">
    <property type="expression patterns" value="baseline and differential"/>
</dbReference>
<dbReference type="GO" id="GO:0005813">
    <property type="term" value="C:centrosome"/>
    <property type="evidence" value="ECO:0000304"/>
    <property type="project" value="ProtInc"/>
</dbReference>
<dbReference type="GO" id="GO:0000785">
    <property type="term" value="C:chromatin"/>
    <property type="evidence" value="ECO:0000314"/>
    <property type="project" value="ComplexPortal"/>
</dbReference>
<dbReference type="GO" id="GO:0005737">
    <property type="term" value="C:cytoplasm"/>
    <property type="evidence" value="ECO:0000318"/>
    <property type="project" value="GO_Central"/>
</dbReference>
<dbReference type="GO" id="GO:0005654">
    <property type="term" value="C:nucleoplasm"/>
    <property type="evidence" value="ECO:0000314"/>
    <property type="project" value="HPA"/>
</dbReference>
<dbReference type="GO" id="GO:0005634">
    <property type="term" value="C:nucleus"/>
    <property type="evidence" value="ECO:0000314"/>
    <property type="project" value="UniProtKB"/>
</dbReference>
<dbReference type="GO" id="GO:0030289">
    <property type="term" value="C:protein phosphatase 4 complex"/>
    <property type="evidence" value="ECO:0000314"/>
    <property type="project" value="UniProtKB"/>
</dbReference>
<dbReference type="GO" id="GO:0019888">
    <property type="term" value="F:protein phosphatase regulator activity"/>
    <property type="evidence" value="ECO:0000315"/>
    <property type="project" value="UniProtKB"/>
</dbReference>
<dbReference type="GO" id="GO:0030674">
    <property type="term" value="F:protein-macromolecule adaptor activity"/>
    <property type="evidence" value="ECO:0000315"/>
    <property type="project" value="UniProtKB"/>
</dbReference>
<dbReference type="GO" id="GO:0006397">
    <property type="term" value="P:mRNA processing"/>
    <property type="evidence" value="ECO:0007669"/>
    <property type="project" value="UniProtKB-KW"/>
</dbReference>
<dbReference type="GO" id="GO:0036211">
    <property type="term" value="P:protein modification process"/>
    <property type="evidence" value="ECO:0000304"/>
    <property type="project" value="ProtInc"/>
</dbReference>
<dbReference type="GO" id="GO:2000779">
    <property type="term" value="P:regulation of double-strand break repair"/>
    <property type="evidence" value="ECO:0000315"/>
    <property type="project" value="ComplexPortal"/>
</dbReference>
<dbReference type="GO" id="GO:0010569">
    <property type="term" value="P:regulation of double-strand break repair via homologous recombination"/>
    <property type="evidence" value="ECO:0000315"/>
    <property type="project" value="UniProtKB"/>
</dbReference>
<dbReference type="GO" id="GO:0008380">
    <property type="term" value="P:RNA splicing"/>
    <property type="evidence" value="ECO:0007669"/>
    <property type="project" value="UniProtKB-KW"/>
</dbReference>
<dbReference type="InterPro" id="IPR015267">
    <property type="entry name" value="PPP4R2"/>
</dbReference>
<dbReference type="PANTHER" id="PTHR16487">
    <property type="entry name" value="PPP4R2-RELATED PROTEIN"/>
    <property type="match status" value="1"/>
</dbReference>
<dbReference type="PANTHER" id="PTHR16487:SF5">
    <property type="entry name" value="SERINE_THREONINE-PROTEIN PHOSPHATASE 4 REGULATORY SUBUNIT 2"/>
    <property type="match status" value="1"/>
</dbReference>
<dbReference type="Pfam" id="PF09184">
    <property type="entry name" value="PPP4R2"/>
    <property type="match status" value="1"/>
</dbReference>
<organism>
    <name type="scientific">Homo sapiens</name>
    <name type="common">Human</name>
    <dbReference type="NCBI Taxonomy" id="9606"/>
    <lineage>
        <taxon>Eukaryota</taxon>
        <taxon>Metazoa</taxon>
        <taxon>Chordata</taxon>
        <taxon>Craniata</taxon>
        <taxon>Vertebrata</taxon>
        <taxon>Euteleostomi</taxon>
        <taxon>Mammalia</taxon>
        <taxon>Eutheria</taxon>
        <taxon>Euarchontoglires</taxon>
        <taxon>Primates</taxon>
        <taxon>Haplorrhini</taxon>
        <taxon>Catarrhini</taxon>
        <taxon>Hominidae</taxon>
        <taxon>Homo</taxon>
    </lineage>
</organism>
<reference key="1">
    <citation type="journal article" date="2000" name="Biochem. J.">
        <title>A novel 50 kDa protein forms complexes with protein phosphatase 4 and is located at centrosomal microtubule organizing centres.</title>
        <authorList>
            <person name="Hastie C.J."/>
            <person name="Carnegie G.K."/>
            <person name="Morrice N."/>
            <person name="Cohen P.T.W."/>
        </authorList>
    </citation>
    <scope>NUCLEOTIDE SEQUENCE [MRNA] (ISOFORM 1)</scope>
    <scope>FUNCTION</scope>
    <scope>SUBCELLULAR LOCATION</scope>
</reference>
<reference key="2">
    <citation type="submission" date="2000-12" db="EMBL/GenBank/DDBJ databases">
        <authorList>
            <person name="Zhang W."/>
            <person name="Li N."/>
            <person name="Wan T."/>
            <person name="Cao X."/>
        </authorList>
    </citation>
    <scope>NUCLEOTIDE SEQUENCE [LARGE SCALE MRNA] (ISOFORM 1)</scope>
</reference>
<reference key="3">
    <citation type="journal article" date="2004" name="Nat. Genet.">
        <title>Complete sequencing and characterization of 21,243 full-length human cDNAs.</title>
        <authorList>
            <person name="Ota T."/>
            <person name="Suzuki Y."/>
            <person name="Nishikawa T."/>
            <person name="Otsuki T."/>
            <person name="Sugiyama T."/>
            <person name="Irie R."/>
            <person name="Wakamatsu A."/>
            <person name="Hayashi K."/>
            <person name="Sato H."/>
            <person name="Nagai K."/>
            <person name="Kimura K."/>
            <person name="Makita H."/>
            <person name="Sekine M."/>
            <person name="Obayashi M."/>
            <person name="Nishi T."/>
            <person name="Shibahara T."/>
            <person name="Tanaka T."/>
            <person name="Ishii S."/>
            <person name="Yamamoto J."/>
            <person name="Saito K."/>
            <person name="Kawai Y."/>
            <person name="Isono Y."/>
            <person name="Nakamura Y."/>
            <person name="Nagahari K."/>
            <person name="Murakami K."/>
            <person name="Yasuda T."/>
            <person name="Iwayanagi T."/>
            <person name="Wagatsuma M."/>
            <person name="Shiratori A."/>
            <person name="Sudo H."/>
            <person name="Hosoiri T."/>
            <person name="Kaku Y."/>
            <person name="Kodaira H."/>
            <person name="Kondo H."/>
            <person name="Sugawara M."/>
            <person name="Takahashi M."/>
            <person name="Kanda K."/>
            <person name="Yokoi T."/>
            <person name="Furuya T."/>
            <person name="Kikkawa E."/>
            <person name="Omura Y."/>
            <person name="Abe K."/>
            <person name="Kamihara K."/>
            <person name="Katsuta N."/>
            <person name="Sato K."/>
            <person name="Tanikawa M."/>
            <person name="Yamazaki M."/>
            <person name="Ninomiya K."/>
            <person name="Ishibashi T."/>
            <person name="Yamashita H."/>
            <person name="Murakawa K."/>
            <person name="Fujimori K."/>
            <person name="Tanai H."/>
            <person name="Kimata M."/>
            <person name="Watanabe M."/>
            <person name="Hiraoka S."/>
            <person name="Chiba Y."/>
            <person name="Ishida S."/>
            <person name="Ono Y."/>
            <person name="Takiguchi S."/>
            <person name="Watanabe S."/>
            <person name="Yosida M."/>
            <person name="Hotuta T."/>
            <person name="Kusano J."/>
            <person name="Kanehori K."/>
            <person name="Takahashi-Fujii A."/>
            <person name="Hara H."/>
            <person name="Tanase T.-O."/>
            <person name="Nomura Y."/>
            <person name="Togiya S."/>
            <person name="Komai F."/>
            <person name="Hara R."/>
            <person name="Takeuchi K."/>
            <person name="Arita M."/>
            <person name="Imose N."/>
            <person name="Musashino K."/>
            <person name="Yuuki H."/>
            <person name="Oshima A."/>
            <person name="Sasaki N."/>
            <person name="Aotsuka S."/>
            <person name="Yoshikawa Y."/>
            <person name="Matsunawa H."/>
            <person name="Ichihara T."/>
            <person name="Shiohata N."/>
            <person name="Sano S."/>
            <person name="Moriya S."/>
            <person name="Momiyama H."/>
            <person name="Satoh N."/>
            <person name="Takami S."/>
            <person name="Terashima Y."/>
            <person name="Suzuki O."/>
            <person name="Nakagawa S."/>
            <person name="Senoh A."/>
            <person name="Mizoguchi H."/>
            <person name="Goto Y."/>
            <person name="Shimizu F."/>
            <person name="Wakebe H."/>
            <person name="Hishigaki H."/>
            <person name="Watanabe T."/>
            <person name="Sugiyama A."/>
            <person name="Takemoto M."/>
            <person name="Kawakami B."/>
            <person name="Yamazaki M."/>
            <person name="Watanabe K."/>
            <person name="Kumagai A."/>
            <person name="Itakura S."/>
            <person name="Fukuzumi Y."/>
            <person name="Fujimori Y."/>
            <person name="Komiyama M."/>
            <person name="Tashiro H."/>
            <person name="Tanigami A."/>
            <person name="Fujiwara T."/>
            <person name="Ono T."/>
            <person name="Yamada K."/>
            <person name="Fujii Y."/>
            <person name="Ozaki K."/>
            <person name="Hirao M."/>
            <person name="Ohmori Y."/>
            <person name="Kawabata A."/>
            <person name="Hikiji T."/>
            <person name="Kobatake N."/>
            <person name="Inagaki H."/>
            <person name="Ikema Y."/>
            <person name="Okamoto S."/>
            <person name="Okitani R."/>
            <person name="Kawakami T."/>
            <person name="Noguchi S."/>
            <person name="Itoh T."/>
            <person name="Shigeta K."/>
            <person name="Senba T."/>
            <person name="Matsumura K."/>
            <person name="Nakajima Y."/>
            <person name="Mizuno T."/>
            <person name="Morinaga M."/>
            <person name="Sasaki M."/>
            <person name="Togashi T."/>
            <person name="Oyama M."/>
            <person name="Hata H."/>
            <person name="Watanabe M."/>
            <person name="Komatsu T."/>
            <person name="Mizushima-Sugano J."/>
            <person name="Satoh T."/>
            <person name="Shirai Y."/>
            <person name="Takahashi Y."/>
            <person name="Nakagawa K."/>
            <person name="Okumura K."/>
            <person name="Nagase T."/>
            <person name="Nomura N."/>
            <person name="Kikuchi H."/>
            <person name="Masuho Y."/>
            <person name="Yamashita R."/>
            <person name="Nakai K."/>
            <person name="Yada T."/>
            <person name="Nakamura Y."/>
            <person name="Ohara O."/>
            <person name="Isogai T."/>
            <person name="Sugano S."/>
        </authorList>
    </citation>
    <scope>NUCLEOTIDE SEQUENCE [LARGE SCALE MRNA] (ISOFORM 1)</scope>
    <source>
        <tissue>Corpus callosum</tissue>
    </source>
</reference>
<reference key="4">
    <citation type="submission" date="2006-12" db="EMBL/GenBank/DDBJ databases">
        <authorList>
            <person name="Mural R.J."/>
            <person name="Istrail S."/>
            <person name="Sutton G.G."/>
            <person name="Florea L."/>
            <person name="Halpern A.L."/>
            <person name="Mobarry C.M."/>
            <person name="Lippert R."/>
            <person name="Walenz B."/>
            <person name="Shatkay H."/>
            <person name="Dew I."/>
            <person name="Miller J.R."/>
            <person name="Flanigan M.J."/>
            <person name="Edwards N.J."/>
            <person name="Bolanos R."/>
            <person name="Fasulo D."/>
            <person name="Halldorsson B.V."/>
            <person name="Hannenhalli S."/>
            <person name="Turner R."/>
            <person name="Yooseph S."/>
            <person name="Lu F."/>
            <person name="Nusskern D.R."/>
            <person name="Shue B.C."/>
            <person name="Zheng X.H."/>
            <person name="Zhong F."/>
            <person name="Delcher A.L."/>
            <person name="Huson D.H."/>
            <person name="Kravitz S.A."/>
            <person name="Mouchard L."/>
            <person name="Reinert K."/>
            <person name="Remington K.A."/>
            <person name="Clark A.G."/>
            <person name="Waterman M.S."/>
            <person name="Eichler E.E."/>
            <person name="Adams M.D."/>
            <person name="Hunkapiller M.W."/>
            <person name="Myers E.W."/>
            <person name="Venter J.C."/>
        </authorList>
    </citation>
    <scope>NUCLEOTIDE SEQUENCE [LARGE SCALE GENOMIC DNA]</scope>
</reference>
<reference key="5">
    <citation type="journal article" date="2004" name="Genome Res.">
        <title>The status, quality, and expansion of the NIH full-length cDNA project: the Mammalian Gene Collection (MGC).</title>
        <authorList>
            <consortium name="The MGC Project Team"/>
        </authorList>
    </citation>
    <scope>NUCLEOTIDE SEQUENCE [LARGE SCALE MRNA] (ISOFORMS 1; 2 AND 3)</scope>
    <source>
        <tissue>Uterus</tissue>
    </source>
</reference>
<reference key="6">
    <citation type="journal article" date="2003" name="J. Cell Sci.">
        <title>Protein phosphatase 4 interacts with the survival of motor neurons complex and enhances the temporal localisation of snRNPs.</title>
        <authorList>
            <person name="Carnegie G.K."/>
            <person name="Sleeman J.E."/>
            <person name="Morrice N."/>
            <person name="Hastie C.J."/>
            <person name="Peggie M.W."/>
            <person name="Philp A."/>
            <person name="Lamond A.I."/>
            <person name="Cohen P.T.W."/>
        </authorList>
    </citation>
    <scope>FUNCTION</scope>
    <scope>TISSUE SPECIFICITY</scope>
    <scope>INTERACTION WITH PPP4C; DDX20 AND GEMIN4</scope>
</reference>
<reference key="7">
    <citation type="journal article" date="2006" name="Cell">
        <title>Global, in vivo, and site-specific phosphorylation dynamics in signaling networks.</title>
        <authorList>
            <person name="Olsen J.V."/>
            <person name="Blagoev B."/>
            <person name="Gnad F."/>
            <person name="Macek B."/>
            <person name="Kumar C."/>
            <person name="Mortensen P."/>
            <person name="Mann M."/>
        </authorList>
    </citation>
    <scope>IDENTIFICATION BY MASS SPECTROMETRY [LARGE SCALE ANALYSIS]</scope>
    <source>
        <tissue>Cervix carcinoma</tissue>
    </source>
</reference>
<reference key="8">
    <citation type="journal article" date="2008" name="Mol. Cell">
        <title>A PP4-phosphatase complex dephosphorylates gamma-H2AX generated during DNA replication.</title>
        <authorList>
            <person name="Chowdhury D."/>
            <person name="Xu X."/>
            <person name="Zhong X."/>
            <person name="Ahmed F."/>
            <person name="Zhong J."/>
            <person name="Liao J."/>
            <person name="Dykxhoorn D.M."/>
            <person name="Weinstock D.M."/>
            <person name="Pfeifer G.P."/>
            <person name="Lieberman J."/>
        </authorList>
    </citation>
    <scope>IDENTIFICATION IN THE PPP4C-PPP4R2-PPP4R3A COMPLEX</scope>
    <scope>IDENTIFICATION IN THE PPP4C-PPP4R2-PPP4R3B COMPLEX</scope>
    <scope>FUNCTION OF THE PPP4C-PPP4R2-PPP4R3A COMPLEX</scope>
</reference>
<reference key="9">
    <citation type="journal article" date="2008" name="Proc. Natl. Acad. Sci. U.S.A.">
        <title>A quantitative atlas of mitotic phosphorylation.</title>
        <authorList>
            <person name="Dephoure N."/>
            <person name="Zhou C."/>
            <person name="Villen J."/>
            <person name="Beausoleil S.A."/>
            <person name="Bakalarski C.E."/>
            <person name="Elledge S.J."/>
            <person name="Gygi S.P."/>
        </authorList>
    </citation>
    <scope>PHOSPHORYLATION [LARGE SCALE ANALYSIS] AT SER-159 AND SER-226</scope>
    <scope>IDENTIFICATION BY MASS SPECTROMETRY [LARGE SCALE ANALYSIS]</scope>
    <source>
        <tissue>Cervix carcinoma</tissue>
    </source>
</reference>
<reference key="10">
    <citation type="journal article" date="2009" name="Anal. Chem.">
        <title>Lys-N and trypsin cover complementary parts of the phosphoproteome in a refined SCX-based approach.</title>
        <authorList>
            <person name="Gauci S."/>
            <person name="Helbig A.O."/>
            <person name="Slijper M."/>
            <person name="Krijgsveld J."/>
            <person name="Heck A.J."/>
            <person name="Mohammed S."/>
        </authorList>
    </citation>
    <scope>IDENTIFICATION BY MASS SPECTROMETRY [LARGE SCALE ANALYSIS]</scope>
</reference>
<reference key="11">
    <citation type="journal article" date="2009" name="Sci. Signal.">
        <title>Quantitative phosphoproteomic analysis of T cell receptor signaling reveals system-wide modulation of protein-protein interactions.</title>
        <authorList>
            <person name="Mayya V."/>
            <person name="Lundgren D.H."/>
            <person name="Hwang S.-I."/>
            <person name="Rezaul K."/>
            <person name="Wu L."/>
            <person name="Eng J.K."/>
            <person name="Rodionov V."/>
            <person name="Han D.K."/>
        </authorList>
    </citation>
    <scope>PHOSPHORYLATION [LARGE SCALE ANALYSIS] AT SER-159 AND SER-226</scope>
    <scope>IDENTIFICATION BY MASS SPECTROMETRY [LARGE SCALE ANALYSIS]</scope>
    <source>
        <tissue>Leukemic T-cell</tissue>
    </source>
</reference>
<reference key="12">
    <citation type="journal article" date="2010" name="Nat. Struct. Mol. Biol.">
        <title>A PP4 phosphatase complex dephosphorylates RPA2 to facilitate DNA repair via homologous recombination.</title>
        <authorList>
            <person name="Lee D.H."/>
            <person name="Pan Y."/>
            <person name="Kanner S."/>
            <person name="Sung P."/>
            <person name="Borowiec J.A."/>
            <person name="Chowdhury D."/>
        </authorList>
    </citation>
    <scope>FUNCTION</scope>
    <scope>INTERACTION WITH RPA2</scope>
    <scope>SUBCELLULAR LOCATION</scope>
    <scope>MUTAGENESIS OF PHE-99; ARG-103 AND GLU-106</scope>
</reference>
<reference key="13">
    <citation type="journal article" date="2010" name="Sci. Signal.">
        <title>Quantitative phosphoproteomics reveals widespread full phosphorylation site occupancy during mitosis.</title>
        <authorList>
            <person name="Olsen J.V."/>
            <person name="Vermeulen M."/>
            <person name="Santamaria A."/>
            <person name="Kumar C."/>
            <person name="Miller M.L."/>
            <person name="Jensen L.J."/>
            <person name="Gnad F."/>
            <person name="Cox J."/>
            <person name="Jensen T.S."/>
            <person name="Nigg E.A."/>
            <person name="Brunak S."/>
            <person name="Mann M."/>
        </authorList>
    </citation>
    <scope>PHOSPHORYLATION [LARGE SCALE ANALYSIS] AT SER-159 AND SER-226</scope>
    <scope>IDENTIFICATION BY MASS SPECTROMETRY [LARGE SCALE ANALYSIS]</scope>
    <source>
        <tissue>Cervix carcinoma</tissue>
    </source>
</reference>
<reference key="14">
    <citation type="journal article" date="2011" name="BMC Syst. Biol.">
        <title>Initial characterization of the human central proteome.</title>
        <authorList>
            <person name="Burkard T.R."/>
            <person name="Planyavsky M."/>
            <person name="Kaupe I."/>
            <person name="Breitwieser F.P."/>
            <person name="Buerckstuemmer T."/>
            <person name="Bennett K.L."/>
            <person name="Superti-Furga G."/>
            <person name="Colinge J."/>
        </authorList>
    </citation>
    <scope>IDENTIFICATION BY MASS SPECTROMETRY [LARGE SCALE ANALYSIS]</scope>
</reference>
<reference key="15">
    <citation type="journal article" date="2011" name="Sci. Signal.">
        <title>System-wide temporal characterization of the proteome and phosphoproteome of human embryonic stem cell differentiation.</title>
        <authorList>
            <person name="Rigbolt K.T."/>
            <person name="Prokhorova T.A."/>
            <person name="Akimov V."/>
            <person name="Henningsen J."/>
            <person name="Johansen P.T."/>
            <person name="Kratchmarova I."/>
            <person name="Kassem M."/>
            <person name="Mann M."/>
            <person name="Olsen J.V."/>
            <person name="Blagoev B."/>
        </authorList>
    </citation>
    <scope>PHOSPHORYLATION [LARGE SCALE ANALYSIS] AT SER-159 AND SER-226</scope>
    <scope>IDENTIFICATION BY MASS SPECTROMETRY [LARGE SCALE ANALYSIS]</scope>
</reference>
<reference key="16">
    <citation type="journal article" date="2013" name="J. Proteome Res.">
        <title>Toward a comprehensive characterization of a human cancer cell phosphoproteome.</title>
        <authorList>
            <person name="Zhou H."/>
            <person name="Di Palma S."/>
            <person name="Preisinger C."/>
            <person name="Peng M."/>
            <person name="Polat A.N."/>
            <person name="Heck A.J."/>
            <person name="Mohammed S."/>
        </authorList>
    </citation>
    <scope>PHOSPHORYLATION [LARGE SCALE ANALYSIS] AT SER-159 AND SER-226</scope>
    <scope>IDENTIFICATION BY MASS SPECTROMETRY [LARGE SCALE ANALYSIS]</scope>
    <source>
        <tissue>Cervix carcinoma</tissue>
        <tissue>Erythroleukemia</tissue>
    </source>
</reference>
<feature type="chain" id="PRO_0000299365" description="Serine/threonine-protein phosphatase 4 regulatory subunit 2">
    <location>
        <begin position="1"/>
        <end position="417"/>
    </location>
</feature>
<feature type="region of interest" description="Disordered" evidence="1">
    <location>
        <begin position="140"/>
        <end position="417"/>
    </location>
</feature>
<feature type="compositionally biased region" description="Polar residues" evidence="1">
    <location>
        <begin position="140"/>
        <end position="149"/>
    </location>
</feature>
<feature type="compositionally biased region" description="Polar residues" evidence="1">
    <location>
        <begin position="158"/>
        <end position="170"/>
    </location>
</feature>
<feature type="compositionally biased region" description="Polar residues" evidence="1">
    <location>
        <begin position="186"/>
        <end position="196"/>
    </location>
</feature>
<feature type="compositionally biased region" description="Basic and acidic residues" evidence="1">
    <location>
        <begin position="197"/>
        <end position="213"/>
    </location>
</feature>
<feature type="compositionally biased region" description="Low complexity" evidence="1">
    <location>
        <begin position="214"/>
        <end position="226"/>
    </location>
</feature>
<feature type="compositionally biased region" description="Basic and acidic residues" evidence="1">
    <location>
        <begin position="231"/>
        <end position="258"/>
    </location>
</feature>
<feature type="compositionally biased region" description="Polar residues" evidence="1">
    <location>
        <begin position="259"/>
        <end position="269"/>
    </location>
</feature>
<feature type="compositionally biased region" description="Basic and acidic residues" evidence="1">
    <location>
        <begin position="283"/>
        <end position="297"/>
    </location>
</feature>
<feature type="compositionally biased region" description="Acidic residues" evidence="1">
    <location>
        <begin position="298"/>
        <end position="311"/>
    </location>
</feature>
<feature type="compositionally biased region" description="Basic and acidic residues" evidence="1">
    <location>
        <begin position="318"/>
        <end position="327"/>
    </location>
</feature>
<feature type="compositionally biased region" description="Acidic residues" evidence="1">
    <location>
        <begin position="338"/>
        <end position="350"/>
    </location>
</feature>
<feature type="compositionally biased region" description="Basic and acidic residues" evidence="1">
    <location>
        <begin position="353"/>
        <end position="363"/>
    </location>
</feature>
<feature type="compositionally biased region" description="Low complexity" evidence="1">
    <location>
        <begin position="366"/>
        <end position="375"/>
    </location>
</feature>
<feature type="compositionally biased region" description="Polar residues" evidence="1">
    <location>
        <begin position="385"/>
        <end position="399"/>
    </location>
</feature>
<feature type="compositionally biased region" description="Acidic residues" evidence="1">
    <location>
        <begin position="400"/>
        <end position="417"/>
    </location>
</feature>
<feature type="modified residue" description="Phosphoserine" evidence="8 9 10 11 12">
    <location>
        <position position="159"/>
    </location>
</feature>
<feature type="modified residue" description="Phosphoserine" evidence="8 9 10 11 12">
    <location>
        <position position="226"/>
    </location>
</feature>
<feature type="splice variant" id="VSP_027612" description="In isoform 3." evidence="6">
    <location>
        <begin position="1"/>
        <end position="56"/>
    </location>
</feature>
<feature type="splice variant" id="VSP_027613" description="In isoform 2." evidence="6">
    <original>MIQWSQFKGYFIFKLEKVMDDFRTSAPEPRGPPNPNVEYIPFDEMKERILKIVTGFNG</original>
    <variation>I</variation>
    <location>
        <begin position="39"/>
        <end position="96"/>
    </location>
</feature>
<feature type="sequence variant" id="VAR_051749" description="In dbSNP:rs2306983.">
    <original>P</original>
    <variation>L</variation>
    <location>
        <position position="174"/>
    </location>
</feature>
<feature type="sequence variant" id="VAR_034811" description="In dbSNP:rs34742137.">
    <original>S</original>
    <variation>C</variation>
    <location>
        <position position="282"/>
    </location>
</feature>
<feature type="mutagenesis site" description="No effect on RPA2-binding; decrease in PPP4C-binding." evidence="5">
    <original>F</original>
    <variation>A</variation>
    <location>
        <position position="99"/>
    </location>
</feature>
<feature type="mutagenesis site" description="No effect on RPA2-binding; loss of PPP4C-binding." evidence="5">
    <original>R</original>
    <variation>A</variation>
    <location>
        <position position="103"/>
    </location>
</feature>
<feature type="mutagenesis site" description="No effect on RPA2-binding, nor on PPP4C-binding." evidence="5">
    <original>E</original>
    <variation>A</variation>
    <location>
        <position position="106"/>
    </location>
</feature>
<evidence type="ECO:0000256" key="1">
    <source>
        <dbReference type="SAM" id="MobiDB-lite"/>
    </source>
</evidence>
<evidence type="ECO:0000269" key="2">
    <source>
    </source>
</evidence>
<evidence type="ECO:0000269" key="3">
    <source>
    </source>
</evidence>
<evidence type="ECO:0000269" key="4">
    <source>
    </source>
</evidence>
<evidence type="ECO:0000269" key="5">
    <source>
    </source>
</evidence>
<evidence type="ECO:0000303" key="6">
    <source>
    </source>
</evidence>
<evidence type="ECO:0000305" key="7"/>
<evidence type="ECO:0007744" key="8">
    <source>
    </source>
</evidence>
<evidence type="ECO:0007744" key="9">
    <source>
    </source>
</evidence>
<evidence type="ECO:0007744" key="10">
    <source>
    </source>
</evidence>
<evidence type="ECO:0007744" key="11">
    <source>
    </source>
</evidence>
<evidence type="ECO:0007744" key="12">
    <source>
    </source>
</evidence>
<accession>Q9NY27</accession>
<accession>A8K1I6</accession>
<accession>Q2TAJ9</accession>
<accession>Q498B8</accession>
<accession>Q8WXX6</accession>
<name>PP4R2_HUMAN</name>
<protein>
    <recommendedName>
        <fullName>Serine/threonine-protein phosphatase 4 regulatory subunit 2</fullName>
    </recommendedName>
</protein>
<proteinExistence type="evidence at protein level"/>
<keyword id="KW-0025">Alternative splicing</keyword>
<keyword id="KW-0963">Cytoplasm</keyword>
<keyword id="KW-0206">Cytoskeleton</keyword>
<keyword id="KW-0507">mRNA processing</keyword>
<keyword id="KW-0508">mRNA splicing</keyword>
<keyword id="KW-0539">Nucleus</keyword>
<keyword id="KW-0597">Phosphoprotein</keyword>
<keyword id="KW-1267">Proteomics identification</keyword>
<keyword id="KW-1185">Reference proteome</keyword>
<sequence>MDVERLQEALKDFEKRGKKEVCPVLDQFLCHVAKTGETMIQWSQFKGYFIFKLEKVMDDFRTSAPEPRGPPNPNVEYIPFDEMKERILKIVTGFNGIPFTIQRLCELLTDPRRNYTGTDKFLRGVEKNVMVVSCVYPSSEKNNSNSLNRMNGVMFPGNSPSYTERSNINGPGTPRPLNRPKVSLSAPMTTNGLPESTDSKEANLQQNEEKNHSDSSTSESEVSSVSPLKNKHPDEDAVEAEGHEVKRLRFDKEGEVRETASQTTSSEISSVMVGETEASSSSQDKDKDSRCTRQHCTEEDEEEDEEEEEESFMTSREMIPERKNQEKESDDALTVNEETSEENNQMEESDVSQAEKDLLHSEGSENEGPVSSSSSDCRETEELVGSNSSKTGEILSESSMENDDEATEVTDEPMEQD</sequence>
<comment type="function">
    <text evidence="2 3 4 5">Regulatory subunit of serine/threonine-protein phosphatase 4 (PP4). May regulate the activity of PPP4C at centrosomal microtubule organizing centers. Its interaction with the SMN complex leads to enhance the temporal localization of snRNPs, suggesting a role of PPP4C in maturation of spliceosomal snRNPs. The PPP4C-PPP4R2-PPP4R3A PP4 complex specifically dephosphorylates H2AX phosphorylated on 'Ser-140' (gamma-H2AX) generated during DNA replication and required for DNA double strand break repair. Mediates RPA2 dephosphorylation by recruiting PPP4C to RPA2 in a DNA damage-dependent manner. RPA2 dephosphorylation is required for the efficient RPA2-mediated recruitment of RAD51 to chromatin following double strand breaks, an essential step for DNA repair.</text>
</comment>
<comment type="subunit">
    <text evidence="3 4 5">Serine/threonine-protein phosphatase 4 (PP4) occurs in different assemblies of the catalytic and one or more regulatory subunits. Component of the PP4 complexes PPP4C-PPP4R2, PPP4C-PPP4R2-PPP4R3A and PPP4C-PPP4R2-PPP4R3B. The PPP4C-PPP4R2 complex appears to be a tetramer composed of 2 molecules of PPP4C and 2 molecules of PPP4R2. Interacts with DDX20/GEMIN3 and GEMIN4. Interacts with RPA2; this DNA damage-dependent interaction recruits PPP4C leading to RPA2 dephosphorylation.</text>
</comment>
<comment type="interaction">
    <interactant intactId="EBI-1048740">
        <id>Q9NY27</id>
    </interactant>
    <interactant intactId="EBI-1046072">
        <id>P60510</id>
        <label>PPP4C</label>
    </interactant>
    <organismsDiffer>false</organismsDiffer>
    <experiments>16</experiments>
</comment>
<comment type="interaction">
    <interactant intactId="EBI-1048740">
        <id>Q9NY27</id>
    </interactant>
    <interactant intactId="EBI-1774121">
        <id>Q15257</id>
        <label>PTPA</label>
    </interactant>
    <organismsDiffer>false</organismsDiffer>
    <experiments>2</experiments>
</comment>
<comment type="subcellular location">
    <subcellularLocation>
        <location>Cytoplasm</location>
        <location>Cytoskeleton</location>
        <location>Microtubule organizing center</location>
        <location>Centrosome</location>
    </subcellularLocation>
    <subcellularLocation>
        <location>Nucleus</location>
    </subcellularLocation>
    <text>Ionizing radiation induces relocalization to nuclear foci and colocalization with RPA2.</text>
</comment>
<comment type="alternative products">
    <event type="alternative splicing"/>
    <isoform>
        <id>Q9NY27-1</id>
        <name>1</name>
        <sequence type="displayed"/>
    </isoform>
    <isoform>
        <id>Q9NY27-2</id>
        <name>2</name>
        <sequence type="described" ref="VSP_027613"/>
    </isoform>
    <isoform>
        <id>Q9NY27-3</id>
        <name>3</name>
        <sequence type="described" ref="VSP_027612"/>
    </isoform>
</comment>
<comment type="tissue specificity">
    <text evidence="3">Widely expressed.</text>
</comment>
<comment type="similarity">
    <text evidence="7">Belongs to the PPP4R2 family.</text>
</comment>
<comment type="sequence caution" evidence="7">
    <conflict type="miscellaneous discrepancy">
        <sequence resource="EMBL-CDS" id="AAI00282"/>
    </conflict>
    <text>Contaminating sequence. Potential poly-A sequence.</text>
</comment>
<comment type="sequence caution" evidence="7">
    <conflict type="erroneous initiation">
        <sequence resource="EMBL-CDS" id="CAB93534"/>
    </conflict>
</comment>